<name>ALO_DEBHA</name>
<protein>
    <recommendedName>
        <fullName>D-arabinono-1,4-lactone oxidase</fullName>
        <shortName>ALO</shortName>
        <ecNumber>1.1.3.37</ecNumber>
    </recommendedName>
    <alternativeName>
        <fullName>L-galactono-gamma-lactone oxidase</fullName>
    </alternativeName>
</protein>
<evidence type="ECO:0000250" key="1"/>
<evidence type="ECO:0000255" key="2">
    <source>
        <dbReference type="PROSITE-ProRule" id="PRU00718"/>
    </source>
</evidence>
<evidence type="ECO:0000305" key="3"/>
<feature type="chain" id="PRO_0000128166" description="D-arabinono-1,4-lactone oxidase">
    <location>
        <begin position="1"/>
        <end position="557"/>
    </location>
</feature>
<feature type="domain" description="FAD-binding PCMH-type" evidence="2">
    <location>
        <begin position="26"/>
        <end position="209"/>
    </location>
</feature>
<feature type="modified residue" description="Pros-8alpha-FAD histidine" evidence="1">
    <location>
        <position position="63"/>
    </location>
</feature>
<accession>Q6BZA0</accession>
<sequence length="557" mass="63709">MRSDIPETLQNFVSTKTVHQTWAKTFFCKPQAIFQPRTVDEIRELVDQARINGKTIMTVGSGHSPSDMTMTKEWLCNLDRFNQVLKKEEFSGPTRNGEGEEVKFVDLTVQAGCRIYELNRYLKENELAIQNLGSISDQSMAGVISTGTHGSTQYHGLVSQQVVSIEIMNSAGKLITCSSMENTQLFKAAMLSLGKIGIITHVTLRTIPKYTIKSKQEIIKFDTLLKNWDTVWLDSEFIRVWWFPYSGNCVCWRASKSSEPLSKPRDSWYGTWFGRKFYESLLWISVHICPHLTPLIEKFVFKNQYGDVETLGHGDVAVQNSVEGLNMDCLFSQFVNEWSTPLSSGQDVLIKLNDVIQTAREQNRFYVHAPIEVRCSNLTYSEKPFVDENDEPSLYPNKKWLAKRDRLSPGPIPGNNLRPYLDNSSNLRYDGDGANVTNDQLTLFINATMYRPFHTNVNSQEWYQLFEDIMTNASGRPHWAKNFIGVNGAHRTDQDLRKQLEFGGKTSYSMKGFNPILKKWFGENLVEYNKVRESMDPDNVFLSGKDWAVRNGILIDV</sequence>
<proteinExistence type="inferred from homology"/>
<organism>
    <name type="scientific">Debaryomyces hansenii (strain ATCC 36239 / CBS 767 / BCRC 21394 / JCM 1990 / NBRC 0083 / IGC 2968)</name>
    <name type="common">Yeast</name>
    <name type="synonym">Torulaspora hansenii</name>
    <dbReference type="NCBI Taxonomy" id="284592"/>
    <lineage>
        <taxon>Eukaryota</taxon>
        <taxon>Fungi</taxon>
        <taxon>Dikarya</taxon>
        <taxon>Ascomycota</taxon>
        <taxon>Saccharomycotina</taxon>
        <taxon>Pichiomycetes</taxon>
        <taxon>Debaryomycetaceae</taxon>
        <taxon>Debaryomyces</taxon>
    </lineage>
</organism>
<keyword id="KW-0274">FAD</keyword>
<keyword id="KW-0285">Flavoprotein</keyword>
<keyword id="KW-0472">Membrane</keyword>
<keyword id="KW-0496">Mitochondrion</keyword>
<keyword id="KW-0560">Oxidoreductase</keyword>
<keyword id="KW-1185">Reference proteome</keyword>
<dbReference type="EC" id="1.1.3.37"/>
<dbReference type="EMBL" id="CR382133">
    <property type="protein sequence ID" value="CAG84421.2"/>
    <property type="molecule type" value="Genomic_DNA"/>
</dbReference>
<dbReference type="RefSeq" id="XP_456469.2">
    <property type="nucleotide sequence ID" value="XM_456469.1"/>
</dbReference>
<dbReference type="SMR" id="Q6BZA0"/>
<dbReference type="FunCoup" id="Q6BZA0">
    <property type="interactions" value="98"/>
</dbReference>
<dbReference type="STRING" id="284592.Q6BZA0"/>
<dbReference type="GeneID" id="2899772"/>
<dbReference type="KEGG" id="dha:DEHA2A02904g"/>
<dbReference type="VEuPathDB" id="FungiDB:DEHA2A02904g"/>
<dbReference type="eggNOG" id="KOG4730">
    <property type="taxonomic scope" value="Eukaryota"/>
</dbReference>
<dbReference type="HOGENOM" id="CLU_003896_4_1_1"/>
<dbReference type="InParanoid" id="Q6BZA0"/>
<dbReference type="OMA" id="YPRFGEF"/>
<dbReference type="OrthoDB" id="610608at2759"/>
<dbReference type="UniPathway" id="UPA00771">
    <property type="reaction ID" value="UER00766"/>
</dbReference>
<dbReference type="Proteomes" id="UP000000599">
    <property type="component" value="Chromosome A"/>
</dbReference>
<dbReference type="GO" id="GO:0031966">
    <property type="term" value="C:mitochondrial membrane"/>
    <property type="evidence" value="ECO:0007669"/>
    <property type="project" value="UniProtKB-SubCell"/>
</dbReference>
<dbReference type="GO" id="GO:0003885">
    <property type="term" value="F:D-arabinono-1,4-lactone oxidase activity"/>
    <property type="evidence" value="ECO:0007669"/>
    <property type="project" value="UniProtKB-EC"/>
</dbReference>
<dbReference type="GO" id="GO:0071949">
    <property type="term" value="F:FAD binding"/>
    <property type="evidence" value="ECO:0007669"/>
    <property type="project" value="InterPro"/>
</dbReference>
<dbReference type="Gene3D" id="3.30.465.10">
    <property type="match status" value="1"/>
</dbReference>
<dbReference type="Gene3D" id="3.30.70.2520">
    <property type="match status" value="1"/>
</dbReference>
<dbReference type="Gene3D" id="3.30.43.10">
    <property type="entry name" value="Uridine Diphospho-n-acetylenolpyruvylglucosamine Reductase, domain 2"/>
    <property type="match status" value="1"/>
</dbReference>
<dbReference type="InterPro" id="IPR007173">
    <property type="entry name" value="ALO_C"/>
</dbReference>
<dbReference type="InterPro" id="IPR016166">
    <property type="entry name" value="FAD-bd_PCMH"/>
</dbReference>
<dbReference type="InterPro" id="IPR036318">
    <property type="entry name" value="FAD-bd_PCMH-like_sf"/>
</dbReference>
<dbReference type="InterPro" id="IPR016167">
    <property type="entry name" value="FAD-bd_PCMH_sub1"/>
</dbReference>
<dbReference type="InterPro" id="IPR016169">
    <property type="entry name" value="FAD-bd_PCMH_sub2"/>
</dbReference>
<dbReference type="InterPro" id="IPR010031">
    <property type="entry name" value="FAD_lactone_oxidase-like"/>
</dbReference>
<dbReference type="InterPro" id="IPR006094">
    <property type="entry name" value="Oxid_FAD_bind_N"/>
</dbReference>
<dbReference type="InterPro" id="IPR006093">
    <property type="entry name" value="Oxy_OxRdtase_FAD_BS"/>
</dbReference>
<dbReference type="InterPro" id="IPR030654">
    <property type="entry name" value="Sugar_lactone_oxidase"/>
</dbReference>
<dbReference type="NCBIfam" id="TIGR01678">
    <property type="entry name" value="FAD_lactone_ox"/>
    <property type="match status" value="1"/>
</dbReference>
<dbReference type="PANTHER" id="PTHR43762:SF1">
    <property type="entry name" value="D-ARABINONO-1,4-LACTONE OXIDASE"/>
    <property type="match status" value="1"/>
</dbReference>
<dbReference type="PANTHER" id="PTHR43762">
    <property type="entry name" value="L-GULONOLACTONE OXIDASE"/>
    <property type="match status" value="1"/>
</dbReference>
<dbReference type="Pfam" id="PF04030">
    <property type="entry name" value="ALO"/>
    <property type="match status" value="1"/>
</dbReference>
<dbReference type="Pfam" id="PF01565">
    <property type="entry name" value="FAD_binding_4"/>
    <property type="match status" value="1"/>
</dbReference>
<dbReference type="PIRSF" id="PIRSF000136">
    <property type="entry name" value="LGO_GLO"/>
    <property type="match status" value="1"/>
</dbReference>
<dbReference type="SUPFAM" id="SSF56176">
    <property type="entry name" value="FAD-binding/transporter-associated domain-like"/>
    <property type="match status" value="1"/>
</dbReference>
<dbReference type="PROSITE" id="PS51387">
    <property type="entry name" value="FAD_PCMH"/>
    <property type="match status" value="1"/>
</dbReference>
<dbReference type="PROSITE" id="PS00862">
    <property type="entry name" value="OX2_COVAL_FAD"/>
    <property type="match status" value="1"/>
</dbReference>
<gene>
    <name type="primary">ALO1</name>
    <name type="ordered locus">DEHA2A02904g</name>
</gene>
<comment type="catalytic activity">
    <reaction>
        <text>D-arabinono-1,4-lactone + O2 = dehydro-D-arabinono-1,4-lactone + H2O2 + H(+)</text>
        <dbReference type="Rhea" id="RHEA:23756"/>
        <dbReference type="ChEBI" id="CHEBI:15378"/>
        <dbReference type="ChEBI" id="CHEBI:15379"/>
        <dbReference type="ChEBI" id="CHEBI:16240"/>
        <dbReference type="ChEBI" id="CHEBI:16292"/>
        <dbReference type="ChEBI" id="CHEBI:58277"/>
        <dbReference type="EC" id="1.1.3.37"/>
    </reaction>
</comment>
<comment type="cofactor">
    <cofactor evidence="1">
        <name>FAD</name>
        <dbReference type="ChEBI" id="CHEBI:57692"/>
    </cofactor>
</comment>
<comment type="pathway">
    <text>Cofactor biosynthesis; D-erythroascorbate biosynthesis; dehydro-D-arabinono-1,4-lactone from D-arabinose: step 2/2.</text>
</comment>
<comment type="subcellular location">
    <subcellularLocation>
        <location evidence="1">Mitochondrion membrane</location>
    </subcellularLocation>
    <text evidence="1">Membrane-embedded.</text>
</comment>
<comment type="similarity">
    <text evidence="3">Belongs to the oxygen-dependent FAD-linked oxidoreductase family.</text>
</comment>
<reference key="1">
    <citation type="journal article" date="2004" name="Nature">
        <title>Genome evolution in yeasts.</title>
        <authorList>
            <person name="Dujon B."/>
            <person name="Sherman D."/>
            <person name="Fischer G."/>
            <person name="Durrens P."/>
            <person name="Casaregola S."/>
            <person name="Lafontaine I."/>
            <person name="de Montigny J."/>
            <person name="Marck C."/>
            <person name="Neuveglise C."/>
            <person name="Talla E."/>
            <person name="Goffard N."/>
            <person name="Frangeul L."/>
            <person name="Aigle M."/>
            <person name="Anthouard V."/>
            <person name="Babour A."/>
            <person name="Barbe V."/>
            <person name="Barnay S."/>
            <person name="Blanchin S."/>
            <person name="Beckerich J.-M."/>
            <person name="Beyne E."/>
            <person name="Bleykasten C."/>
            <person name="Boisrame A."/>
            <person name="Boyer J."/>
            <person name="Cattolico L."/>
            <person name="Confanioleri F."/>
            <person name="de Daruvar A."/>
            <person name="Despons L."/>
            <person name="Fabre E."/>
            <person name="Fairhead C."/>
            <person name="Ferry-Dumazet H."/>
            <person name="Groppi A."/>
            <person name="Hantraye F."/>
            <person name="Hennequin C."/>
            <person name="Jauniaux N."/>
            <person name="Joyet P."/>
            <person name="Kachouri R."/>
            <person name="Kerrest A."/>
            <person name="Koszul R."/>
            <person name="Lemaire M."/>
            <person name="Lesur I."/>
            <person name="Ma L."/>
            <person name="Muller H."/>
            <person name="Nicaud J.-M."/>
            <person name="Nikolski M."/>
            <person name="Oztas S."/>
            <person name="Ozier-Kalogeropoulos O."/>
            <person name="Pellenz S."/>
            <person name="Potier S."/>
            <person name="Richard G.-F."/>
            <person name="Straub M.-L."/>
            <person name="Suleau A."/>
            <person name="Swennen D."/>
            <person name="Tekaia F."/>
            <person name="Wesolowski-Louvel M."/>
            <person name="Westhof E."/>
            <person name="Wirth B."/>
            <person name="Zeniou-Meyer M."/>
            <person name="Zivanovic Y."/>
            <person name="Bolotin-Fukuhara M."/>
            <person name="Thierry A."/>
            <person name="Bouchier C."/>
            <person name="Caudron B."/>
            <person name="Scarpelli C."/>
            <person name="Gaillardin C."/>
            <person name="Weissenbach J."/>
            <person name="Wincker P."/>
            <person name="Souciet J.-L."/>
        </authorList>
    </citation>
    <scope>NUCLEOTIDE SEQUENCE [LARGE SCALE GENOMIC DNA]</scope>
    <source>
        <strain>ATCC 36239 / CBS 767 / BCRC 21394 / JCM 1990 / NBRC 0083 / IGC 2968</strain>
    </source>
</reference>